<protein>
    <recommendedName>
        <fullName evidence="2">RNA-directed RNA polymerase catalytic subunit</fullName>
        <ecNumber evidence="2">2.7.7.48</ecNumber>
    </recommendedName>
    <alternativeName>
        <fullName evidence="2">Polymerase basic protein 1</fullName>
        <shortName evidence="2">PB1</shortName>
    </alternativeName>
    <alternativeName>
        <fullName evidence="2">RNA-directed RNA polymerase subunit P1</fullName>
    </alternativeName>
</protein>
<organismHost>
    <name type="scientific">Aves</name>
    <dbReference type="NCBI Taxonomy" id="8782"/>
</organismHost>
<organismHost>
    <name type="scientific">Homo sapiens</name>
    <name type="common">Human</name>
    <dbReference type="NCBI Taxonomy" id="9606"/>
</organismHost>
<organismHost>
    <name type="scientific">Sus scrofa</name>
    <name type="common">Pig</name>
    <dbReference type="NCBI Taxonomy" id="9823"/>
</organismHost>
<reference key="1">
    <citation type="submission" date="2007-09" db="EMBL/GenBank/DDBJ databases">
        <title>The NIAID influenza genome sequencing project.</title>
        <authorList>
            <person name="Spiro D."/>
            <person name="Sengamalay N."/>
            <person name="Boyne A."/>
            <person name="Bera J."/>
            <person name="Zaborsky J."/>
            <person name="Subbu V."/>
            <person name="Sparenborg J."/>
            <person name="Gallagher T."/>
            <person name="Overton L."/>
            <person name="Althoff R."/>
            <person name="Liu X."/>
            <person name="Ghedin E."/>
            <person name="Sitz J."/>
            <person name="Katzel D."/>
            <person name="Neupane R."/>
            <person name="Shumway M."/>
            <person name="Koo H."/>
            <person name="Edelman L."/>
            <person name="Menegus M."/>
            <person name="Mayer C."/>
            <person name="Dale S."/>
            <person name="Bao Y."/>
            <person name="Bolotov P."/>
            <person name="Dernovoy D."/>
            <person name="Kiryutin B."/>
            <person name="Lipman D.J."/>
            <person name="Tatusova T."/>
        </authorList>
    </citation>
    <scope>NUCLEOTIDE SEQUENCE [GENOMIC RNA]</scope>
</reference>
<reference key="2">
    <citation type="submission" date="2007-09" db="EMBL/GenBank/DDBJ databases">
        <authorList>
            <consortium name="The NIAID Influenza Genome Sequencing Consortium"/>
        </authorList>
    </citation>
    <scope>NUCLEOTIDE SEQUENCE [GENOMIC RNA]</scope>
</reference>
<evidence type="ECO:0000250" key="1">
    <source>
        <dbReference type="UniProtKB" id="P03431"/>
    </source>
</evidence>
<evidence type="ECO:0000255" key="2">
    <source>
        <dbReference type="HAMAP-Rule" id="MF_04065"/>
    </source>
</evidence>
<evidence type="ECO:0000256" key="3">
    <source>
        <dbReference type="SAM" id="MobiDB-lite"/>
    </source>
</evidence>
<accession>A8C8K2</accession>
<name>RDRP_I07A0</name>
<dbReference type="EC" id="2.7.7.48" evidence="2"/>
<dbReference type="EMBL" id="CY026217">
    <property type="protein sequence ID" value="ABV45934.1"/>
    <property type="molecule type" value="Viral_cRNA"/>
</dbReference>
<dbReference type="SMR" id="A8C8K2"/>
<dbReference type="Proteomes" id="UP001395887">
    <property type="component" value="Genome"/>
</dbReference>
<dbReference type="GO" id="GO:0030430">
    <property type="term" value="C:host cell cytoplasm"/>
    <property type="evidence" value="ECO:0007669"/>
    <property type="project" value="UniProtKB-SubCell"/>
</dbReference>
<dbReference type="GO" id="GO:0042025">
    <property type="term" value="C:host cell nucleus"/>
    <property type="evidence" value="ECO:0007669"/>
    <property type="project" value="UniProtKB-SubCell"/>
</dbReference>
<dbReference type="GO" id="GO:0000166">
    <property type="term" value="F:nucleotide binding"/>
    <property type="evidence" value="ECO:0007669"/>
    <property type="project" value="UniProtKB-UniRule"/>
</dbReference>
<dbReference type="GO" id="GO:0003723">
    <property type="term" value="F:RNA binding"/>
    <property type="evidence" value="ECO:0007669"/>
    <property type="project" value="InterPro"/>
</dbReference>
<dbReference type="GO" id="GO:0003968">
    <property type="term" value="F:RNA-directed RNA polymerase activity"/>
    <property type="evidence" value="ECO:0007669"/>
    <property type="project" value="UniProtKB-UniRule"/>
</dbReference>
<dbReference type="GO" id="GO:0006351">
    <property type="term" value="P:DNA-templated transcription"/>
    <property type="evidence" value="ECO:0007669"/>
    <property type="project" value="UniProtKB-UniRule"/>
</dbReference>
<dbReference type="GO" id="GO:0039657">
    <property type="term" value="P:symbiont-mediated suppression of host gene expression"/>
    <property type="evidence" value="ECO:0007669"/>
    <property type="project" value="UniProtKB-KW"/>
</dbReference>
<dbReference type="GO" id="GO:0039523">
    <property type="term" value="P:symbiont-mediated suppression of host mRNA transcription via inhibition of RNA polymerase II activity"/>
    <property type="evidence" value="ECO:0007669"/>
    <property type="project" value="UniProtKB-UniRule"/>
</dbReference>
<dbReference type="GO" id="GO:0039694">
    <property type="term" value="P:viral RNA genome replication"/>
    <property type="evidence" value="ECO:0007669"/>
    <property type="project" value="UniProtKB-UniRule"/>
</dbReference>
<dbReference type="GO" id="GO:0019083">
    <property type="term" value="P:viral transcription"/>
    <property type="evidence" value="ECO:0007669"/>
    <property type="project" value="UniProtKB-KW"/>
</dbReference>
<dbReference type="Gene3D" id="6.10.140.720">
    <property type="match status" value="1"/>
</dbReference>
<dbReference type="HAMAP" id="MF_04065">
    <property type="entry name" value="INFV_RDRP"/>
    <property type="match status" value="1"/>
</dbReference>
<dbReference type="InterPro" id="IPR007099">
    <property type="entry name" value="RNA-dir_pol_NSvirus"/>
</dbReference>
<dbReference type="InterPro" id="IPR001407">
    <property type="entry name" value="RNA_pol_PB1_influenza"/>
</dbReference>
<dbReference type="Pfam" id="PF00602">
    <property type="entry name" value="Flu_PB1"/>
    <property type="match status" value="1"/>
</dbReference>
<dbReference type="PIRSF" id="PIRSF000827">
    <property type="entry name" value="RdRPol_OMV"/>
    <property type="match status" value="1"/>
</dbReference>
<dbReference type="PROSITE" id="PS50525">
    <property type="entry name" value="RDRP_SSRNA_NEG_SEG"/>
    <property type="match status" value="1"/>
</dbReference>
<keyword id="KW-1262">Eukaryotic host gene expression shutoff by virus</keyword>
<keyword id="KW-1191">Eukaryotic host transcription shutoff by virus</keyword>
<keyword id="KW-1035">Host cytoplasm</keyword>
<keyword id="KW-1190">Host gene expression shutoff by virus</keyword>
<keyword id="KW-1048">Host nucleus</keyword>
<keyword id="KW-0945">Host-virus interaction</keyword>
<keyword id="KW-1104">Inhibition of host RNA polymerase II by virus</keyword>
<keyword id="KW-0547">Nucleotide-binding</keyword>
<keyword id="KW-0548">Nucleotidyltransferase</keyword>
<keyword id="KW-0597">Phosphoprotein</keyword>
<keyword id="KW-0696">RNA-directed RNA polymerase</keyword>
<keyword id="KW-0808">Transferase</keyword>
<keyword id="KW-0693">Viral RNA replication</keyword>
<keyword id="KW-1195">Viral transcription</keyword>
<sequence>MDVNPTLLFLKVPAQNAISTTFPYTGDPPYSHGTGTGYTMDTVNRTHQYSERGRWTKNTETGAPQLNPIDGPLPEDNEPSGYAQTDCVLEAMAFLEESHPGIFENSCIETMEVVQQTRVDKLTQGRQTYDWTLNRNQPAATALANTIEVFRSNGLIANESGRLIDFLKDVMESMDRDEVEVTTHFQRKRRVRDNVTKKMVTQRTIGKKKHKLDKRSYLIRALTLNTMTKDAERGKLKRRAIATPGMQIRGFVYFVETLARSICEKLEQSGLPVGGNEKKAKLANVVRKMMTNSQDTEISFTITGDNTKWNENQNPRMFLAMITYITKNQPEWFRNILSIAPIMFSNKMARLGKGYMFESKSMKLRTQIPAEMLANIDLKYFNDSTKKKIEKIRPLLIDGTASLSPGMMMGMFNMLSTVLGVSILNLGQKRYTKTTYWWDGLQSSDDFALIVNAPNYAGIQAGVDRFYRTCKLLGINMSKKKSYINRTGTFEFTSFFYRYGFVANFSMELPSFGVSGVNESADMSIGVTVIKNNMINNDLGPATAQMALQLFIKDYRYTYRCHRGDTQIQTRRSFEIKKLWDQTRSKAGLLVSDGGPNLYNIRNLHIPEVCLKWELMDEDYQGRLCNPLNPFVSHKEIESVNNAVIMPAHGPAKNMEYDAVATTHSWVPKRNRSILNTSQRGVLEDEQMYQRCCNLFEKFFPSSSYRRPVGISSMVEAMVSRARIDARIDFESGRIKKEEFAEIMKICSTIEDLRRQK</sequence>
<comment type="function">
    <text evidence="2">RNA-dependent RNA polymerase which is responsible for replication and transcription of virus RNA segments. The transcription of viral mRNAs occurs by a unique mechanism called cap-snatching. 5' methylated caps of cellular mRNAs are cleaved after 10-13 nucleotides by PA. In turn, these short capped RNAs are used as primers by PB1 for transcription of viral mRNAs. During virus replication, PB1 initiates RNA synthesis and copy vRNA into complementary RNA (cRNA) which in turn serves as a template for the production of more vRNAs.</text>
</comment>
<comment type="catalytic activity">
    <reaction evidence="2">
        <text>RNA(n) + a ribonucleoside 5'-triphosphate = RNA(n+1) + diphosphate</text>
        <dbReference type="Rhea" id="RHEA:21248"/>
        <dbReference type="Rhea" id="RHEA-COMP:14527"/>
        <dbReference type="Rhea" id="RHEA-COMP:17342"/>
        <dbReference type="ChEBI" id="CHEBI:33019"/>
        <dbReference type="ChEBI" id="CHEBI:61557"/>
        <dbReference type="ChEBI" id="CHEBI:140395"/>
        <dbReference type="EC" id="2.7.7.48"/>
    </reaction>
</comment>
<comment type="subunit">
    <text evidence="1 2">Influenza RNA polymerase is composed of three subunits: PB1, PB2 and PA. Interacts (via N-terminus) with PA (via C-terminus). Interacts (via C-terminus) with PB2 (via N-terminus); this interaction is essential for transcription initiation. Interacts (via C-terminus) with human PKP2 (via N-terminus); the interaction competitively inhibits the interaction between the RNA polymerase subunits PB1 and PB2 (By similarity).</text>
</comment>
<comment type="subcellular location">
    <subcellularLocation>
        <location evidence="2">Host nucleus</location>
    </subcellularLocation>
    <subcellularLocation>
        <location evidence="2">Host cytoplasm</location>
    </subcellularLocation>
</comment>
<comment type="PTM">
    <text evidence="2">Phosphorylated by host PRKCA.</text>
</comment>
<comment type="similarity">
    <text evidence="2">Belongs to the influenza viruses polymerase PB1 family.</text>
</comment>
<feature type="chain" id="PRO_0000373045" description="RNA-directed RNA polymerase catalytic subunit">
    <location>
        <begin position="1"/>
        <end position="757"/>
    </location>
</feature>
<feature type="domain" description="RdRp catalytic" evidence="2">
    <location>
        <begin position="286"/>
        <end position="483"/>
    </location>
</feature>
<feature type="region of interest" description="Disordered" evidence="3">
    <location>
        <begin position="50"/>
        <end position="82"/>
    </location>
</feature>
<feature type="region of interest" description="Promoter-binding site" evidence="2">
    <location>
        <begin position="249"/>
        <end position="256"/>
    </location>
</feature>
<feature type="short sequence motif" description="Nuclear localization signal" evidence="2">
    <location>
        <begin position="187"/>
        <end position="195"/>
    </location>
</feature>
<feature type="short sequence motif" description="Nuclear localization signal" evidence="2">
    <location>
        <begin position="203"/>
        <end position="216"/>
    </location>
</feature>
<proteinExistence type="inferred from homology"/>
<gene>
    <name evidence="2" type="primary">PB1</name>
</gene>
<organism>
    <name type="scientific">Influenza A virus (strain A/USA:Texas/UR06-0195/2007 H1N1)</name>
    <dbReference type="NCBI Taxonomy" id="455880"/>
    <lineage>
        <taxon>Viruses</taxon>
        <taxon>Riboviria</taxon>
        <taxon>Orthornavirae</taxon>
        <taxon>Negarnaviricota</taxon>
        <taxon>Polyploviricotina</taxon>
        <taxon>Insthoviricetes</taxon>
        <taxon>Articulavirales</taxon>
        <taxon>Orthomyxoviridae</taxon>
        <taxon>Alphainfluenzavirus</taxon>
        <taxon>Alphainfluenzavirus influenzae</taxon>
        <taxon>Influenza A virus</taxon>
    </lineage>
</organism>